<feature type="chain" id="PRO_0000371554" description="Putative CCR4-associated factor 1 homolog 4">
    <location>
        <begin position="1"/>
        <end position="302"/>
    </location>
</feature>
<feature type="binding site" evidence="1">
    <location>
        <position position="29"/>
    </location>
    <ligand>
        <name>a divalent metal cation</name>
        <dbReference type="ChEBI" id="CHEBI:60240"/>
        <note>catalytic</note>
    </ligand>
</feature>
<feature type="binding site" evidence="1">
    <location>
        <position position="31"/>
    </location>
    <ligand>
        <name>a divalent metal cation</name>
        <dbReference type="ChEBI" id="CHEBI:60240"/>
        <note>catalytic</note>
    </ligand>
</feature>
<feature type="binding site" evidence="1">
    <location>
        <position position="145"/>
    </location>
    <ligand>
        <name>a divalent metal cation</name>
        <dbReference type="ChEBI" id="CHEBI:60240"/>
        <note>catalytic</note>
    </ligand>
</feature>
<feature type="binding site" evidence="1">
    <location>
        <position position="218"/>
    </location>
    <ligand>
        <name>a divalent metal cation</name>
        <dbReference type="ChEBI" id="CHEBI:60240"/>
        <note>catalytic</note>
    </ligand>
</feature>
<dbReference type="EC" id="3.1.13.4"/>
<dbReference type="EMBL" id="AC069471">
    <property type="protein sequence ID" value="AAG51471.1"/>
    <property type="molecule type" value="Genomic_DNA"/>
</dbReference>
<dbReference type="EMBL" id="AC079280">
    <property type="protein sequence ID" value="AAG50583.1"/>
    <property type="molecule type" value="Genomic_DNA"/>
</dbReference>
<dbReference type="EMBL" id="CP002684">
    <property type="protein sequence ID" value="AEE30888.1"/>
    <property type="molecule type" value="Genomic_DNA"/>
</dbReference>
<dbReference type="PIR" id="B86404">
    <property type="entry name" value="B86404"/>
</dbReference>
<dbReference type="RefSeq" id="NP_174110.1">
    <property type="nucleotide sequence ID" value="NM_102554.2"/>
</dbReference>
<dbReference type="SMR" id="Q9C6M9"/>
<dbReference type="BioGRID" id="24917">
    <property type="interactions" value="1"/>
</dbReference>
<dbReference type="FunCoup" id="Q9C6M9">
    <property type="interactions" value="112"/>
</dbReference>
<dbReference type="STRING" id="3702.Q9C6M9"/>
<dbReference type="iPTMnet" id="Q9C6M9"/>
<dbReference type="PaxDb" id="3702-AT1G27890.1"/>
<dbReference type="DNASU" id="839682"/>
<dbReference type="EnsemblPlants" id="AT1G27890.1">
    <property type="protein sequence ID" value="AT1G27890.1"/>
    <property type="gene ID" value="AT1G27890"/>
</dbReference>
<dbReference type="GeneID" id="839682"/>
<dbReference type="Gramene" id="AT1G27890.1">
    <property type="protein sequence ID" value="AT1G27890.1"/>
    <property type="gene ID" value="AT1G27890"/>
</dbReference>
<dbReference type="KEGG" id="ath:AT1G27890"/>
<dbReference type="Araport" id="AT1G27890"/>
<dbReference type="TAIR" id="AT1G27890">
    <property type="gene designation" value="CAF1D"/>
</dbReference>
<dbReference type="eggNOG" id="KOG0304">
    <property type="taxonomic scope" value="Eukaryota"/>
</dbReference>
<dbReference type="HOGENOM" id="CLU_027974_1_3_1"/>
<dbReference type="InParanoid" id="Q9C6M9"/>
<dbReference type="OMA" id="FHETVEQ"/>
<dbReference type="PhylomeDB" id="Q9C6M9"/>
<dbReference type="PRO" id="PR:Q9C6M9"/>
<dbReference type="Proteomes" id="UP000006548">
    <property type="component" value="Chromosome 1"/>
</dbReference>
<dbReference type="ExpressionAtlas" id="Q9C6M9">
    <property type="expression patterns" value="baseline and differential"/>
</dbReference>
<dbReference type="GO" id="GO:0030014">
    <property type="term" value="C:CCR4-NOT complex"/>
    <property type="evidence" value="ECO:0007669"/>
    <property type="project" value="InterPro"/>
</dbReference>
<dbReference type="GO" id="GO:0005737">
    <property type="term" value="C:cytoplasm"/>
    <property type="evidence" value="ECO:0007669"/>
    <property type="project" value="UniProtKB-SubCell"/>
</dbReference>
<dbReference type="GO" id="GO:0005634">
    <property type="term" value="C:nucleus"/>
    <property type="evidence" value="ECO:0007669"/>
    <property type="project" value="UniProtKB-SubCell"/>
</dbReference>
<dbReference type="GO" id="GO:0046872">
    <property type="term" value="F:metal ion binding"/>
    <property type="evidence" value="ECO:0007669"/>
    <property type="project" value="UniProtKB-KW"/>
</dbReference>
<dbReference type="GO" id="GO:0004535">
    <property type="term" value="F:poly(A)-specific ribonuclease activity"/>
    <property type="evidence" value="ECO:0007669"/>
    <property type="project" value="UniProtKB-EC"/>
</dbReference>
<dbReference type="GO" id="GO:0003723">
    <property type="term" value="F:RNA binding"/>
    <property type="evidence" value="ECO:0007669"/>
    <property type="project" value="UniProtKB-KW"/>
</dbReference>
<dbReference type="FunFam" id="3.30.420.10:FF:000223">
    <property type="entry name" value="Probable CCR4-associated factor 1 homolog 5"/>
    <property type="match status" value="1"/>
</dbReference>
<dbReference type="Gene3D" id="3.30.420.10">
    <property type="entry name" value="Ribonuclease H-like superfamily/Ribonuclease H"/>
    <property type="match status" value="1"/>
</dbReference>
<dbReference type="InterPro" id="IPR039637">
    <property type="entry name" value="CNOT7/CNOT8/Pop2"/>
</dbReference>
<dbReference type="InterPro" id="IPR006941">
    <property type="entry name" value="RNase_CAF1"/>
</dbReference>
<dbReference type="InterPro" id="IPR012337">
    <property type="entry name" value="RNaseH-like_sf"/>
</dbReference>
<dbReference type="InterPro" id="IPR036397">
    <property type="entry name" value="RNaseH_sf"/>
</dbReference>
<dbReference type="PANTHER" id="PTHR10797">
    <property type="entry name" value="CCR4-NOT TRANSCRIPTION COMPLEX SUBUNIT"/>
    <property type="match status" value="1"/>
</dbReference>
<dbReference type="Pfam" id="PF04857">
    <property type="entry name" value="CAF1"/>
    <property type="match status" value="1"/>
</dbReference>
<dbReference type="SUPFAM" id="SSF53098">
    <property type="entry name" value="Ribonuclease H-like"/>
    <property type="match status" value="1"/>
</dbReference>
<name>CAF1D_ARATH</name>
<sequence>MGEVWRWNKEVEMDSIRDCLKHFSSIAIDTEFPGCLKETPMDASEEIRYRDMKFNVDNTHLIQLGFTLFDRRGITKTWEINLSDFNEHKCFKNDKSIAFLKSNGLNLDKIGEEGIGIEEFFRDFSQILKEKDGKITWVNFQGSYDNAYLVKGLTGGKPLPETKEEFHETVEQLLGKFVFDVKKIAESCSGLSSRFGLQRIADVLQMKRVGKAHHAGSDSELTARVFTKLTFDLLNSRKQCVRRVDHQQYQLEQQQLMMTRCYIPIPIPIPRPRSVMFAAHHPNPYFGGGYFGMPVQGRNYVL</sequence>
<organism>
    <name type="scientific">Arabidopsis thaliana</name>
    <name type="common">Mouse-ear cress</name>
    <dbReference type="NCBI Taxonomy" id="3702"/>
    <lineage>
        <taxon>Eukaryota</taxon>
        <taxon>Viridiplantae</taxon>
        <taxon>Streptophyta</taxon>
        <taxon>Embryophyta</taxon>
        <taxon>Tracheophyta</taxon>
        <taxon>Spermatophyta</taxon>
        <taxon>Magnoliopsida</taxon>
        <taxon>eudicotyledons</taxon>
        <taxon>Gunneridae</taxon>
        <taxon>Pentapetalae</taxon>
        <taxon>rosids</taxon>
        <taxon>malvids</taxon>
        <taxon>Brassicales</taxon>
        <taxon>Brassicaceae</taxon>
        <taxon>Camelineae</taxon>
        <taxon>Arabidopsis</taxon>
    </lineage>
</organism>
<reference key="1">
    <citation type="journal article" date="2000" name="Nature">
        <title>Sequence and analysis of chromosome 1 of the plant Arabidopsis thaliana.</title>
        <authorList>
            <person name="Theologis A."/>
            <person name="Ecker J.R."/>
            <person name="Palm C.J."/>
            <person name="Federspiel N.A."/>
            <person name="Kaul S."/>
            <person name="White O."/>
            <person name="Alonso J."/>
            <person name="Altafi H."/>
            <person name="Araujo R."/>
            <person name="Bowman C.L."/>
            <person name="Brooks S.Y."/>
            <person name="Buehler E."/>
            <person name="Chan A."/>
            <person name="Chao Q."/>
            <person name="Chen H."/>
            <person name="Cheuk R.F."/>
            <person name="Chin C.W."/>
            <person name="Chung M.K."/>
            <person name="Conn L."/>
            <person name="Conway A.B."/>
            <person name="Conway A.R."/>
            <person name="Creasy T.H."/>
            <person name="Dewar K."/>
            <person name="Dunn P."/>
            <person name="Etgu P."/>
            <person name="Feldblyum T.V."/>
            <person name="Feng J.-D."/>
            <person name="Fong B."/>
            <person name="Fujii C.Y."/>
            <person name="Gill J.E."/>
            <person name="Goldsmith A.D."/>
            <person name="Haas B."/>
            <person name="Hansen N.F."/>
            <person name="Hughes B."/>
            <person name="Huizar L."/>
            <person name="Hunter J.L."/>
            <person name="Jenkins J."/>
            <person name="Johnson-Hopson C."/>
            <person name="Khan S."/>
            <person name="Khaykin E."/>
            <person name="Kim C.J."/>
            <person name="Koo H.L."/>
            <person name="Kremenetskaia I."/>
            <person name="Kurtz D.B."/>
            <person name="Kwan A."/>
            <person name="Lam B."/>
            <person name="Langin-Hooper S."/>
            <person name="Lee A."/>
            <person name="Lee J.M."/>
            <person name="Lenz C.A."/>
            <person name="Li J.H."/>
            <person name="Li Y.-P."/>
            <person name="Lin X."/>
            <person name="Liu S.X."/>
            <person name="Liu Z.A."/>
            <person name="Luros J.S."/>
            <person name="Maiti R."/>
            <person name="Marziali A."/>
            <person name="Militscher J."/>
            <person name="Miranda M."/>
            <person name="Nguyen M."/>
            <person name="Nierman W.C."/>
            <person name="Osborne B.I."/>
            <person name="Pai G."/>
            <person name="Peterson J."/>
            <person name="Pham P.K."/>
            <person name="Rizzo M."/>
            <person name="Rooney T."/>
            <person name="Rowley D."/>
            <person name="Sakano H."/>
            <person name="Salzberg S.L."/>
            <person name="Schwartz J.R."/>
            <person name="Shinn P."/>
            <person name="Southwick A.M."/>
            <person name="Sun H."/>
            <person name="Tallon L.J."/>
            <person name="Tambunga G."/>
            <person name="Toriumi M.J."/>
            <person name="Town C.D."/>
            <person name="Utterback T."/>
            <person name="Van Aken S."/>
            <person name="Vaysberg M."/>
            <person name="Vysotskaia V.S."/>
            <person name="Walker M."/>
            <person name="Wu D."/>
            <person name="Yu G."/>
            <person name="Fraser C.M."/>
            <person name="Venter J.C."/>
            <person name="Davis R.W."/>
        </authorList>
    </citation>
    <scope>NUCLEOTIDE SEQUENCE [LARGE SCALE GENOMIC DNA]</scope>
    <source>
        <strain>cv. Columbia</strain>
    </source>
</reference>
<reference key="2">
    <citation type="journal article" date="2017" name="Plant J.">
        <title>Araport11: a complete reannotation of the Arabidopsis thaliana reference genome.</title>
        <authorList>
            <person name="Cheng C.Y."/>
            <person name="Krishnakumar V."/>
            <person name="Chan A.P."/>
            <person name="Thibaud-Nissen F."/>
            <person name="Schobel S."/>
            <person name="Town C.D."/>
        </authorList>
    </citation>
    <scope>GENOME REANNOTATION</scope>
    <source>
        <strain>cv. Columbia</strain>
    </source>
</reference>
<accession>Q9C6M9</accession>
<accession>Q9C7G3</accession>
<protein>
    <recommendedName>
        <fullName>Putative CCR4-associated factor 1 homolog 4</fullName>
        <ecNumber>3.1.13.4</ecNumber>
    </recommendedName>
</protein>
<proteinExistence type="inferred from homology"/>
<comment type="function">
    <text evidence="1">Ubiquitous transcription factor required for a diverse set of processes. It is a component of the CCR4 complex involved in the control of gene expression (By similarity).</text>
</comment>
<comment type="catalytic activity">
    <reaction>
        <text>Exonucleolytic cleavage of poly(A) to 5'-AMP.</text>
        <dbReference type="EC" id="3.1.13.4"/>
    </reaction>
</comment>
<comment type="cofactor">
    <cofactor evidence="1">
        <name>a divalent metal cation</name>
        <dbReference type="ChEBI" id="CHEBI:60240"/>
    </cofactor>
</comment>
<comment type="subunit">
    <text evidence="1">Component of the CCR4-NOT complex, at least composed of CRR4 and CAF1 proteins.</text>
</comment>
<comment type="subcellular location">
    <subcellularLocation>
        <location evidence="1">Nucleus</location>
    </subcellularLocation>
    <subcellularLocation>
        <location evidence="1">Cytoplasm</location>
    </subcellularLocation>
</comment>
<comment type="similarity">
    <text evidence="2">Belongs to the CAF1 family.</text>
</comment>
<gene>
    <name type="primary">CAF1-4</name>
    <name type="ordered locus">At1g27890</name>
    <name type="ORF">F13K9.1</name>
    <name type="ORF">F28L5.5</name>
</gene>
<keyword id="KW-0963">Cytoplasm</keyword>
<keyword id="KW-0269">Exonuclease</keyword>
<keyword id="KW-0378">Hydrolase</keyword>
<keyword id="KW-0479">Metal-binding</keyword>
<keyword id="KW-0540">Nuclease</keyword>
<keyword id="KW-0539">Nucleus</keyword>
<keyword id="KW-1185">Reference proteome</keyword>
<keyword id="KW-0694">RNA-binding</keyword>
<keyword id="KW-0804">Transcription</keyword>
<keyword id="KW-0805">Transcription regulation</keyword>
<evidence type="ECO:0000250" key="1"/>
<evidence type="ECO:0000305" key="2"/>